<dbReference type="EC" id="6.1.1.11" evidence="1"/>
<dbReference type="EMBL" id="AE016822">
    <property type="protein sequence ID" value="AAT88284.1"/>
    <property type="molecule type" value="Genomic_DNA"/>
</dbReference>
<dbReference type="RefSeq" id="WP_011185289.1">
    <property type="nucleotide sequence ID" value="NC_006087.1"/>
</dbReference>
<dbReference type="SMR" id="Q6AH61"/>
<dbReference type="STRING" id="281090.Lxx02390"/>
<dbReference type="KEGG" id="lxx:Lxx02390"/>
<dbReference type="eggNOG" id="COG0172">
    <property type="taxonomic scope" value="Bacteria"/>
</dbReference>
<dbReference type="HOGENOM" id="CLU_023797_0_1_11"/>
<dbReference type="UniPathway" id="UPA00906">
    <property type="reaction ID" value="UER00895"/>
</dbReference>
<dbReference type="Proteomes" id="UP000001306">
    <property type="component" value="Chromosome"/>
</dbReference>
<dbReference type="GO" id="GO:0005737">
    <property type="term" value="C:cytoplasm"/>
    <property type="evidence" value="ECO:0007669"/>
    <property type="project" value="UniProtKB-SubCell"/>
</dbReference>
<dbReference type="GO" id="GO:0005524">
    <property type="term" value="F:ATP binding"/>
    <property type="evidence" value="ECO:0007669"/>
    <property type="project" value="UniProtKB-UniRule"/>
</dbReference>
<dbReference type="GO" id="GO:0004828">
    <property type="term" value="F:serine-tRNA ligase activity"/>
    <property type="evidence" value="ECO:0007669"/>
    <property type="project" value="UniProtKB-UniRule"/>
</dbReference>
<dbReference type="GO" id="GO:0016260">
    <property type="term" value="P:selenocysteine biosynthetic process"/>
    <property type="evidence" value="ECO:0007669"/>
    <property type="project" value="UniProtKB-UniRule"/>
</dbReference>
<dbReference type="GO" id="GO:0006434">
    <property type="term" value="P:seryl-tRNA aminoacylation"/>
    <property type="evidence" value="ECO:0007669"/>
    <property type="project" value="UniProtKB-UniRule"/>
</dbReference>
<dbReference type="CDD" id="cd00770">
    <property type="entry name" value="SerRS_core"/>
    <property type="match status" value="1"/>
</dbReference>
<dbReference type="Gene3D" id="3.30.930.10">
    <property type="entry name" value="Bira Bifunctional Protein, Domain 2"/>
    <property type="match status" value="1"/>
</dbReference>
<dbReference type="Gene3D" id="1.10.287.40">
    <property type="entry name" value="Serine-tRNA synthetase, tRNA binding domain"/>
    <property type="match status" value="1"/>
</dbReference>
<dbReference type="HAMAP" id="MF_00176">
    <property type="entry name" value="Ser_tRNA_synth_type1"/>
    <property type="match status" value="1"/>
</dbReference>
<dbReference type="InterPro" id="IPR002314">
    <property type="entry name" value="aa-tRNA-synt_IIb"/>
</dbReference>
<dbReference type="InterPro" id="IPR006195">
    <property type="entry name" value="aa-tRNA-synth_II"/>
</dbReference>
<dbReference type="InterPro" id="IPR045864">
    <property type="entry name" value="aa-tRNA-synth_II/BPL/LPL"/>
</dbReference>
<dbReference type="InterPro" id="IPR002317">
    <property type="entry name" value="Ser-tRNA-ligase_type_1"/>
</dbReference>
<dbReference type="InterPro" id="IPR015866">
    <property type="entry name" value="Ser-tRNA-synth_1_N"/>
</dbReference>
<dbReference type="InterPro" id="IPR042103">
    <property type="entry name" value="SerRS_1_N_sf"/>
</dbReference>
<dbReference type="InterPro" id="IPR033729">
    <property type="entry name" value="SerRS_core"/>
</dbReference>
<dbReference type="InterPro" id="IPR010978">
    <property type="entry name" value="tRNA-bd_arm"/>
</dbReference>
<dbReference type="NCBIfam" id="TIGR00414">
    <property type="entry name" value="serS"/>
    <property type="match status" value="1"/>
</dbReference>
<dbReference type="PANTHER" id="PTHR11778">
    <property type="entry name" value="SERYL-TRNA SYNTHETASE"/>
    <property type="match status" value="1"/>
</dbReference>
<dbReference type="Pfam" id="PF02403">
    <property type="entry name" value="Seryl_tRNA_N"/>
    <property type="match status" value="1"/>
</dbReference>
<dbReference type="Pfam" id="PF00587">
    <property type="entry name" value="tRNA-synt_2b"/>
    <property type="match status" value="1"/>
</dbReference>
<dbReference type="PIRSF" id="PIRSF001529">
    <property type="entry name" value="Ser-tRNA-synth_IIa"/>
    <property type="match status" value="1"/>
</dbReference>
<dbReference type="PRINTS" id="PR00981">
    <property type="entry name" value="TRNASYNTHSER"/>
</dbReference>
<dbReference type="SUPFAM" id="SSF55681">
    <property type="entry name" value="Class II aaRS and biotin synthetases"/>
    <property type="match status" value="1"/>
</dbReference>
<dbReference type="SUPFAM" id="SSF46589">
    <property type="entry name" value="tRNA-binding arm"/>
    <property type="match status" value="1"/>
</dbReference>
<dbReference type="PROSITE" id="PS50862">
    <property type="entry name" value="AA_TRNA_LIGASE_II"/>
    <property type="match status" value="1"/>
</dbReference>
<name>SYS_LEIXX</name>
<organism>
    <name type="scientific">Leifsonia xyli subsp. xyli (strain CTCB07)</name>
    <dbReference type="NCBI Taxonomy" id="281090"/>
    <lineage>
        <taxon>Bacteria</taxon>
        <taxon>Bacillati</taxon>
        <taxon>Actinomycetota</taxon>
        <taxon>Actinomycetes</taxon>
        <taxon>Micrococcales</taxon>
        <taxon>Microbacteriaceae</taxon>
        <taxon>Leifsonia</taxon>
    </lineage>
</organism>
<proteinExistence type="inferred from homology"/>
<keyword id="KW-0030">Aminoacyl-tRNA synthetase</keyword>
<keyword id="KW-0067">ATP-binding</keyword>
<keyword id="KW-0963">Cytoplasm</keyword>
<keyword id="KW-0436">Ligase</keyword>
<keyword id="KW-0547">Nucleotide-binding</keyword>
<keyword id="KW-0648">Protein biosynthesis</keyword>
<keyword id="KW-1185">Reference proteome</keyword>
<sequence>MIDPVLLREHPDVLRRSQEARGDSVQLVDEALQVDIERRAAITAFEELRAEQNAFGKRVAQAPKQEKKELVAQAQQLAGRVKEAQQVAAAAEARFESVLRKIGNPVVAGVPSGGEDDYAVLKEVGGIPAFGFEPRDHLALGELLGAIDMARGAKVSGARFSFLRGLGARLEIALMNLALDKALANGFVPLITPTLVKPEVMQGTGFLGEHSDEVYHLETDDLYLTGTSEVALAGYHADEILDVTEPLRYAGWSTCYRREAGSAGKDTRGIIRVHQFTKLEMFVYTLPEHAEAEHARLLAWQEEMMQALGLSYRVIDTAAGDLGSSAARKYDVEAWIPTQGRYRELTSTSNCGTFQARRLETRYRTESGKTAPVATLNGTLATTRWIVAILETHQREDGSVLVPETLRPYLGGLEILEPIGK</sequence>
<reference key="1">
    <citation type="journal article" date="2004" name="Mol. Plant Microbe Interact.">
        <title>The genome sequence of the Gram-positive sugarcane pathogen Leifsonia xyli subsp. xyli.</title>
        <authorList>
            <person name="Monteiro-Vitorello C.B."/>
            <person name="Camargo L.E.A."/>
            <person name="Van Sluys M.A."/>
            <person name="Kitajima J.P."/>
            <person name="Truffi D."/>
            <person name="do Amaral A.M."/>
            <person name="Harakava R."/>
            <person name="de Oliveira J.C.F."/>
            <person name="Wood D."/>
            <person name="de Oliveira M.C."/>
            <person name="Miyaki C.Y."/>
            <person name="Takita M.A."/>
            <person name="da Silva A.C.R."/>
            <person name="Furlan L.R."/>
            <person name="Carraro D.M."/>
            <person name="Camarotte G."/>
            <person name="Almeida N.F. Jr."/>
            <person name="Carrer H."/>
            <person name="Coutinho L.L."/>
            <person name="El-Dorry H.A."/>
            <person name="Ferro M.I.T."/>
            <person name="Gagliardi P.R."/>
            <person name="Giglioti E."/>
            <person name="Goldman M.H.S."/>
            <person name="Goldman G.H."/>
            <person name="Kimura E.T."/>
            <person name="Ferro E.S."/>
            <person name="Kuramae E.E."/>
            <person name="Lemos E.G.M."/>
            <person name="Lemos M.V.F."/>
            <person name="Mauro S.M.Z."/>
            <person name="Machado M.A."/>
            <person name="Marino C.L."/>
            <person name="Menck C.F."/>
            <person name="Nunes L.R."/>
            <person name="Oliveira R.C."/>
            <person name="Pereira G.G."/>
            <person name="Siqueira W."/>
            <person name="de Souza A.A."/>
            <person name="Tsai S.M."/>
            <person name="Zanca A.S."/>
            <person name="Simpson A.J.G."/>
            <person name="Brumbley S.M."/>
            <person name="Setubal J.C."/>
        </authorList>
    </citation>
    <scope>NUCLEOTIDE SEQUENCE [LARGE SCALE GENOMIC DNA]</scope>
    <source>
        <strain>CTCB07</strain>
    </source>
</reference>
<evidence type="ECO:0000255" key="1">
    <source>
        <dbReference type="HAMAP-Rule" id="MF_00176"/>
    </source>
</evidence>
<accession>Q6AH61</accession>
<gene>
    <name evidence="1" type="primary">serS</name>
    <name type="ordered locus">Lxx02390</name>
</gene>
<feature type="chain" id="PRO_1000019716" description="Serine--tRNA ligase">
    <location>
        <begin position="1"/>
        <end position="421"/>
    </location>
</feature>
<feature type="binding site" evidence="1">
    <location>
        <begin position="227"/>
        <end position="229"/>
    </location>
    <ligand>
        <name>L-serine</name>
        <dbReference type="ChEBI" id="CHEBI:33384"/>
    </ligand>
</feature>
<feature type="binding site" evidence="1">
    <location>
        <begin position="257"/>
        <end position="259"/>
    </location>
    <ligand>
        <name>ATP</name>
        <dbReference type="ChEBI" id="CHEBI:30616"/>
    </ligand>
</feature>
<feature type="binding site" evidence="1">
    <location>
        <position position="273"/>
    </location>
    <ligand>
        <name>ATP</name>
        <dbReference type="ChEBI" id="CHEBI:30616"/>
    </ligand>
</feature>
<feature type="binding site" evidence="1">
    <location>
        <position position="280"/>
    </location>
    <ligand>
        <name>L-serine</name>
        <dbReference type="ChEBI" id="CHEBI:33384"/>
    </ligand>
</feature>
<feature type="binding site" evidence="1">
    <location>
        <begin position="344"/>
        <end position="347"/>
    </location>
    <ligand>
        <name>ATP</name>
        <dbReference type="ChEBI" id="CHEBI:30616"/>
    </ligand>
</feature>
<feature type="binding site" evidence="1">
    <location>
        <position position="379"/>
    </location>
    <ligand>
        <name>L-serine</name>
        <dbReference type="ChEBI" id="CHEBI:33384"/>
    </ligand>
</feature>
<protein>
    <recommendedName>
        <fullName evidence="1">Serine--tRNA ligase</fullName>
        <ecNumber evidence="1">6.1.1.11</ecNumber>
    </recommendedName>
    <alternativeName>
        <fullName evidence="1">Seryl-tRNA synthetase</fullName>
        <shortName evidence="1">SerRS</shortName>
    </alternativeName>
    <alternativeName>
        <fullName evidence="1">Seryl-tRNA(Ser/Sec) synthetase</fullName>
    </alternativeName>
</protein>
<comment type="function">
    <text evidence="1">Catalyzes the attachment of serine to tRNA(Ser). Is also able to aminoacylate tRNA(Sec) with serine, to form the misacylated tRNA L-seryl-tRNA(Sec), which will be further converted into selenocysteinyl-tRNA(Sec).</text>
</comment>
<comment type="catalytic activity">
    <reaction evidence="1">
        <text>tRNA(Ser) + L-serine + ATP = L-seryl-tRNA(Ser) + AMP + diphosphate + H(+)</text>
        <dbReference type="Rhea" id="RHEA:12292"/>
        <dbReference type="Rhea" id="RHEA-COMP:9669"/>
        <dbReference type="Rhea" id="RHEA-COMP:9703"/>
        <dbReference type="ChEBI" id="CHEBI:15378"/>
        <dbReference type="ChEBI" id="CHEBI:30616"/>
        <dbReference type="ChEBI" id="CHEBI:33019"/>
        <dbReference type="ChEBI" id="CHEBI:33384"/>
        <dbReference type="ChEBI" id="CHEBI:78442"/>
        <dbReference type="ChEBI" id="CHEBI:78533"/>
        <dbReference type="ChEBI" id="CHEBI:456215"/>
        <dbReference type="EC" id="6.1.1.11"/>
    </reaction>
</comment>
<comment type="catalytic activity">
    <reaction evidence="1">
        <text>tRNA(Sec) + L-serine + ATP = L-seryl-tRNA(Sec) + AMP + diphosphate + H(+)</text>
        <dbReference type="Rhea" id="RHEA:42580"/>
        <dbReference type="Rhea" id="RHEA-COMP:9742"/>
        <dbReference type="Rhea" id="RHEA-COMP:10128"/>
        <dbReference type="ChEBI" id="CHEBI:15378"/>
        <dbReference type="ChEBI" id="CHEBI:30616"/>
        <dbReference type="ChEBI" id="CHEBI:33019"/>
        <dbReference type="ChEBI" id="CHEBI:33384"/>
        <dbReference type="ChEBI" id="CHEBI:78442"/>
        <dbReference type="ChEBI" id="CHEBI:78533"/>
        <dbReference type="ChEBI" id="CHEBI:456215"/>
        <dbReference type="EC" id="6.1.1.11"/>
    </reaction>
</comment>
<comment type="pathway">
    <text evidence="1">Aminoacyl-tRNA biosynthesis; selenocysteinyl-tRNA(Sec) biosynthesis; L-seryl-tRNA(Sec) from L-serine and tRNA(Sec): step 1/1.</text>
</comment>
<comment type="subunit">
    <text evidence="1">Homodimer. The tRNA molecule binds across the dimer.</text>
</comment>
<comment type="subcellular location">
    <subcellularLocation>
        <location evidence="1">Cytoplasm</location>
    </subcellularLocation>
</comment>
<comment type="domain">
    <text evidence="1">Consists of two distinct domains, a catalytic core and a N-terminal extension that is involved in tRNA binding.</text>
</comment>
<comment type="similarity">
    <text evidence="1">Belongs to the class-II aminoacyl-tRNA synthetase family. Type-1 seryl-tRNA synthetase subfamily.</text>
</comment>